<reference key="1">
    <citation type="journal article" date="2009" name="PLoS Genet.">
        <title>Organised genome dynamics in the Escherichia coli species results in highly diverse adaptive paths.</title>
        <authorList>
            <person name="Touchon M."/>
            <person name="Hoede C."/>
            <person name="Tenaillon O."/>
            <person name="Barbe V."/>
            <person name="Baeriswyl S."/>
            <person name="Bidet P."/>
            <person name="Bingen E."/>
            <person name="Bonacorsi S."/>
            <person name="Bouchier C."/>
            <person name="Bouvet O."/>
            <person name="Calteau A."/>
            <person name="Chiapello H."/>
            <person name="Clermont O."/>
            <person name="Cruveiller S."/>
            <person name="Danchin A."/>
            <person name="Diard M."/>
            <person name="Dossat C."/>
            <person name="Karoui M.E."/>
            <person name="Frapy E."/>
            <person name="Garry L."/>
            <person name="Ghigo J.M."/>
            <person name="Gilles A.M."/>
            <person name="Johnson J."/>
            <person name="Le Bouguenec C."/>
            <person name="Lescat M."/>
            <person name="Mangenot S."/>
            <person name="Martinez-Jehanne V."/>
            <person name="Matic I."/>
            <person name="Nassif X."/>
            <person name="Oztas S."/>
            <person name="Petit M.A."/>
            <person name="Pichon C."/>
            <person name="Rouy Z."/>
            <person name="Ruf C.S."/>
            <person name="Schneider D."/>
            <person name="Tourret J."/>
            <person name="Vacherie B."/>
            <person name="Vallenet D."/>
            <person name="Medigue C."/>
            <person name="Rocha E.P.C."/>
            <person name="Denamur E."/>
        </authorList>
    </citation>
    <scope>NUCLEOTIDE SEQUENCE [LARGE SCALE GENOMIC DNA]</scope>
    <source>
        <strain>UMN026 / ExPEC</strain>
    </source>
</reference>
<dbReference type="EC" id="3.4.21.105" evidence="1"/>
<dbReference type="EMBL" id="CU928163">
    <property type="protein sequence ID" value="CAR15028.1"/>
    <property type="molecule type" value="Genomic_DNA"/>
</dbReference>
<dbReference type="RefSeq" id="WP_000928723.1">
    <property type="nucleotide sequence ID" value="NC_011751.1"/>
</dbReference>
<dbReference type="RefSeq" id="YP_002414533.1">
    <property type="nucleotide sequence ID" value="NC_011751.1"/>
</dbReference>
<dbReference type="SMR" id="B7NE28"/>
<dbReference type="STRING" id="585056.ECUMN_3882"/>
<dbReference type="MEROPS" id="S54.016"/>
<dbReference type="GeneID" id="86862178"/>
<dbReference type="KEGG" id="eum:ECUMN_3882"/>
<dbReference type="PATRIC" id="fig|585056.7.peg.4056"/>
<dbReference type="HOGENOM" id="CLU_058989_0_0_6"/>
<dbReference type="Proteomes" id="UP000007097">
    <property type="component" value="Chromosome"/>
</dbReference>
<dbReference type="GO" id="GO:0005886">
    <property type="term" value="C:plasma membrane"/>
    <property type="evidence" value="ECO:0007669"/>
    <property type="project" value="UniProtKB-SubCell"/>
</dbReference>
<dbReference type="GO" id="GO:0004252">
    <property type="term" value="F:serine-type endopeptidase activity"/>
    <property type="evidence" value="ECO:0007669"/>
    <property type="project" value="UniProtKB-UniRule"/>
</dbReference>
<dbReference type="GO" id="GO:0006508">
    <property type="term" value="P:proteolysis"/>
    <property type="evidence" value="ECO:0007669"/>
    <property type="project" value="UniProtKB-UniRule"/>
</dbReference>
<dbReference type="FunFam" id="1.20.1540.10:FF:000003">
    <property type="entry name" value="Rhomboid protease GlpG"/>
    <property type="match status" value="1"/>
</dbReference>
<dbReference type="FunFam" id="3.30.70.2350:FF:000001">
    <property type="entry name" value="Rhomboid protease GlpG"/>
    <property type="match status" value="1"/>
</dbReference>
<dbReference type="Gene3D" id="3.30.70.2350">
    <property type="match status" value="1"/>
</dbReference>
<dbReference type="Gene3D" id="1.20.1540.10">
    <property type="entry name" value="Rhomboid-like"/>
    <property type="match status" value="1"/>
</dbReference>
<dbReference type="HAMAP" id="MF_01594">
    <property type="entry name" value="Rhomboid_GlpG"/>
    <property type="match status" value="1"/>
</dbReference>
<dbReference type="InterPro" id="IPR038236">
    <property type="entry name" value="GlpG_N_sf"/>
</dbReference>
<dbReference type="InterPro" id="IPR022732">
    <property type="entry name" value="Peptidase_S54_GlpG_N"/>
</dbReference>
<dbReference type="InterPro" id="IPR022764">
    <property type="entry name" value="Peptidase_S54_rhomboid_dom"/>
</dbReference>
<dbReference type="InterPro" id="IPR035952">
    <property type="entry name" value="Rhomboid-like_sf"/>
</dbReference>
<dbReference type="InterPro" id="IPR023662">
    <property type="entry name" value="Rhomboid_protease_GlpG"/>
</dbReference>
<dbReference type="NCBIfam" id="NF008155">
    <property type="entry name" value="PRK10907.1"/>
    <property type="match status" value="1"/>
</dbReference>
<dbReference type="NCBIfam" id="TIGR04239">
    <property type="entry name" value="rhombo_GlpG"/>
    <property type="match status" value="1"/>
</dbReference>
<dbReference type="PANTHER" id="PTHR43066:SF26">
    <property type="entry name" value="RHOMBOID PROTEASE GLPG"/>
    <property type="match status" value="1"/>
</dbReference>
<dbReference type="PANTHER" id="PTHR43066">
    <property type="entry name" value="RHOMBOID-RELATED PROTEIN"/>
    <property type="match status" value="1"/>
</dbReference>
<dbReference type="Pfam" id="PF01694">
    <property type="entry name" value="Rhomboid"/>
    <property type="match status" value="1"/>
</dbReference>
<dbReference type="Pfam" id="PF12122">
    <property type="entry name" value="Rhomboid_N"/>
    <property type="match status" value="1"/>
</dbReference>
<dbReference type="SUPFAM" id="SSF144091">
    <property type="entry name" value="Rhomboid-like"/>
    <property type="match status" value="1"/>
</dbReference>
<organism>
    <name type="scientific">Escherichia coli O17:K52:H18 (strain UMN026 / ExPEC)</name>
    <dbReference type="NCBI Taxonomy" id="585056"/>
    <lineage>
        <taxon>Bacteria</taxon>
        <taxon>Pseudomonadati</taxon>
        <taxon>Pseudomonadota</taxon>
        <taxon>Gammaproteobacteria</taxon>
        <taxon>Enterobacterales</taxon>
        <taxon>Enterobacteriaceae</taxon>
        <taxon>Escherichia</taxon>
    </lineage>
</organism>
<comment type="function">
    <text evidence="1">Rhomboid-type serine protease that catalyzes intramembrane proteolysis.</text>
</comment>
<comment type="catalytic activity">
    <reaction evidence="1">
        <text>Cleaves type-1 transmembrane domains using a catalytic dyad composed of serine and histidine that are contributed by different transmembrane domains.</text>
        <dbReference type="EC" id="3.4.21.105"/>
    </reaction>
</comment>
<comment type="subcellular location">
    <subcellularLocation>
        <location evidence="1">Cell inner membrane</location>
        <topology evidence="1">Multi-pass membrane protein</topology>
    </subcellularLocation>
</comment>
<comment type="similarity">
    <text evidence="1">Belongs to the peptidase S54 family.</text>
</comment>
<protein>
    <recommendedName>
        <fullName evidence="1">Rhomboid protease GlpG</fullName>
        <ecNumber evidence="1">3.4.21.105</ecNumber>
    </recommendedName>
    <alternativeName>
        <fullName evidence="1">Intramembrane serine protease</fullName>
    </alternativeName>
</protein>
<proteinExistence type="inferred from homology"/>
<keyword id="KW-0997">Cell inner membrane</keyword>
<keyword id="KW-1003">Cell membrane</keyword>
<keyword id="KW-0378">Hydrolase</keyword>
<keyword id="KW-0472">Membrane</keyword>
<keyword id="KW-0645">Protease</keyword>
<keyword id="KW-0720">Serine protease</keyword>
<keyword id="KW-0812">Transmembrane</keyword>
<keyword id="KW-1133">Transmembrane helix</keyword>
<gene>
    <name evidence="1" type="primary">glpG</name>
    <name type="ordered locus">ECUMN_3882</name>
</gene>
<sequence>MLMITSFANPRVAQAFVDYMATQGVILTIQQHNQSDVWLADESQAERVRAELARFLENPADPRYLAASWQAGHTGSGLHYRRYPFFAALRERAGPVTWVMMIACVVVFIAMQILGDQEVMLWLAWPFDPTLKFEFWRYFTHALMHFSLMHILFNLLWWWYLGGAVEKRLGSGKLIVITLISALLSGYVQQKFSGPWFGGLSGVVYALMGYVWLRGERDPQSGIYLQRGLIIFALIWIVAGWFDLFGMSMANGAHIAGLAVGLAMAFVDSLNARKRK</sequence>
<name>GLPG_ECOLU</name>
<evidence type="ECO:0000255" key="1">
    <source>
        <dbReference type="HAMAP-Rule" id="MF_01594"/>
    </source>
</evidence>
<feature type="chain" id="PRO_1000147857" description="Rhomboid protease GlpG">
    <location>
        <begin position="1"/>
        <end position="276"/>
    </location>
</feature>
<feature type="transmembrane region" description="Helical" evidence="1">
    <location>
        <begin position="94"/>
        <end position="114"/>
    </location>
</feature>
<feature type="transmembrane region" description="Helical" evidence="1">
    <location>
        <begin position="142"/>
        <end position="162"/>
    </location>
</feature>
<feature type="transmembrane region" description="Helical" evidence="1">
    <location>
        <begin position="169"/>
        <end position="189"/>
    </location>
</feature>
<feature type="transmembrane region" description="Helical" evidence="1">
    <location>
        <begin position="192"/>
        <end position="212"/>
    </location>
</feature>
<feature type="transmembrane region" description="Helical" evidence="1">
    <location>
        <begin position="229"/>
        <end position="249"/>
    </location>
</feature>
<feature type="transmembrane region" description="Helical" evidence="1">
    <location>
        <begin position="250"/>
        <end position="270"/>
    </location>
</feature>
<feature type="active site" description="Nucleophile" evidence="1">
    <location>
        <position position="201"/>
    </location>
</feature>
<feature type="active site" evidence="1">
    <location>
        <position position="254"/>
    </location>
</feature>
<accession>B7NE28</accession>